<reference key="1">
    <citation type="journal article" date="2002" name="Nature">
        <title>The genome sequence of Schizosaccharomyces pombe.</title>
        <authorList>
            <person name="Wood V."/>
            <person name="Gwilliam R."/>
            <person name="Rajandream M.A."/>
            <person name="Lyne M.H."/>
            <person name="Lyne R."/>
            <person name="Stewart A."/>
            <person name="Sgouros J.G."/>
            <person name="Peat N."/>
            <person name="Hayles J."/>
            <person name="Baker S.G."/>
            <person name="Basham D."/>
            <person name="Bowman S."/>
            <person name="Brooks K."/>
            <person name="Brown D."/>
            <person name="Brown S."/>
            <person name="Chillingworth T."/>
            <person name="Churcher C.M."/>
            <person name="Collins M."/>
            <person name="Connor R."/>
            <person name="Cronin A."/>
            <person name="Davis P."/>
            <person name="Feltwell T."/>
            <person name="Fraser A."/>
            <person name="Gentles S."/>
            <person name="Goble A."/>
            <person name="Hamlin N."/>
            <person name="Harris D.E."/>
            <person name="Hidalgo J."/>
            <person name="Hodgson G."/>
            <person name="Holroyd S."/>
            <person name="Hornsby T."/>
            <person name="Howarth S."/>
            <person name="Huckle E.J."/>
            <person name="Hunt S."/>
            <person name="Jagels K."/>
            <person name="James K.D."/>
            <person name="Jones L."/>
            <person name="Jones M."/>
            <person name="Leather S."/>
            <person name="McDonald S."/>
            <person name="McLean J."/>
            <person name="Mooney P."/>
            <person name="Moule S."/>
            <person name="Mungall K.L."/>
            <person name="Murphy L.D."/>
            <person name="Niblett D."/>
            <person name="Odell C."/>
            <person name="Oliver K."/>
            <person name="O'Neil S."/>
            <person name="Pearson D."/>
            <person name="Quail M.A."/>
            <person name="Rabbinowitsch E."/>
            <person name="Rutherford K.M."/>
            <person name="Rutter S."/>
            <person name="Saunders D."/>
            <person name="Seeger K."/>
            <person name="Sharp S."/>
            <person name="Skelton J."/>
            <person name="Simmonds M.N."/>
            <person name="Squares R."/>
            <person name="Squares S."/>
            <person name="Stevens K."/>
            <person name="Taylor K."/>
            <person name="Taylor R.G."/>
            <person name="Tivey A."/>
            <person name="Walsh S.V."/>
            <person name="Warren T."/>
            <person name="Whitehead S."/>
            <person name="Woodward J.R."/>
            <person name="Volckaert G."/>
            <person name="Aert R."/>
            <person name="Robben J."/>
            <person name="Grymonprez B."/>
            <person name="Weltjens I."/>
            <person name="Vanstreels E."/>
            <person name="Rieger M."/>
            <person name="Schaefer M."/>
            <person name="Mueller-Auer S."/>
            <person name="Gabel C."/>
            <person name="Fuchs M."/>
            <person name="Duesterhoeft A."/>
            <person name="Fritzc C."/>
            <person name="Holzer E."/>
            <person name="Moestl D."/>
            <person name="Hilbert H."/>
            <person name="Borzym K."/>
            <person name="Langer I."/>
            <person name="Beck A."/>
            <person name="Lehrach H."/>
            <person name="Reinhardt R."/>
            <person name="Pohl T.M."/>
            <person name="Eger P."/>
            <person name="Zimmermann W."/>
            <person name="Wedler H."/>
            <person name="Wambutt R."/>
            <person name="Purnelle B."/>
            <person name="Goffeau A."/>
            <person name="Cadieu E."/>
            <person name="Dreano S."/>
            <person name="Gloux S."/>
            <person name="Lelaure V."/>
            <person name="Mottier S."/>
            <person name="Galibert F."/>
            <person name="Aves S.J."/>
            <person name="Xiang Z."/>
            <person name="Hunt C."/>
            <person name="Moore K."/>
            <person name="Hurst S.M."/>
            <person name="Lucas M."/>
            <person name="Rochet M."/>
            <person name="Gaillardin C."/>
            <person name="Tallada V.A."/>
            <person name="Garzon A."/>
            <person name="Thode G."/>
            <person name="Daga R.R."/>
            <person name="Cruzado L."/>
            <person name="Jimenez J."/>
            <person name="Sanchez M."/>
            <person name="del Rey F."/>
            <person name="Benito J."/>
            <person name="Dominguez A."/>
            <person name="Revuelta J.L."/>
            <person name="Moreno S."/>
            <person name="Armstrong J."/>
            <person name="Forsburg S.L."/>
            <person name="Cerutti L."/>
            <person name="Lowe T."/>
            <person name="McCombie W.R."/>
            <person name="Paulsen I."/>
            <person name="Potashkin J."/>
            <person name="Shpakovski G.V."/>
            <person name="Ussery D."/>
            <person name="Barrell B.G."/>
            <person name="Nurse P."/>
        </authorList>
    </citation>
    <scope>NUCLEOTIDE SEQUENCE [LARGE SCALE GENOMIC DNA]</scope>
    <source>
        <strain>972 / ATCC 24843</strain>
    </source>
</reference>
<reference key="2">
    <citation type="submission" date="1997-05" db="EMBL/GenBank/DDBJ databases">
        <title>The Schizosaccharomyces pombe cho2+ gene encodes a phosphatidylethanolamine methyltransferase.</title>
        <authorList>
            <person name="Kanipes M.I."/>
            <person name="Henry S.A."/>
        </authorList>
    </citation>
    <scope>NUCLEOTIDE SEQUENCE [GENOMIC DNA] OF 130-905</scope>
</reference>
<reference key="3">
    <citation type="journal article" date="2006" name="Nat. Biotechnol.">
        <title>ORFeome cloning and global analysis of protein localization in the fission yeast Schizosaccharomyces pombe.</title>
        <authorList>
            <person name="Matsuyama A."/>
            <person name="Arai R."/>
            <person name="Yashiroda Y."/>
            <person name="Shirai A."/>
            <person name="Kamata A."/>
            <person name="Sekido S."/>
            <person name="Kobayashi Y."/>
            <person name="Hashimoto A."/>
            <person name="Hamamoto M."/>
            <person name="Hiraoka Y."/>
            <person name="Horinouchi S."/>
            <person name="Yoshida M."/>
        </authorList>
    </citation>
    <scope>SUBCELLULAR LOCATION [LARGE SCALE ANALYSIS]</scope>
</reference>
<reference key="4">
    <citation type="journal article" date="2008" name="J. Proteome Res.">
        <title>Phosphoproteome analysis of fission yeast.</title>
        <authorList>
            <person name="Wilson-Grady J.T."/>
            <person name="Villen J."/>
            <person name="Gygi S.P."/>
        </authorList>
    </citation>
    <scope>PHOSPHORYLATION [LARGE SCALE ANALYSIS] AT SER-353</scope>
    <scope>IDENTIFICATION BY MASS SPECTROMETRY</scope>
</reference>
<comment type="function">
    <text evidence="1">Catalyzes the first step of the methylation pathway of phosphatidylcholine biosynthesis, the SAM-dependent methylation of phosphatidylethanolamine (PE) to phosphatidylmonomethylethanolamine (PMME).</text>
</comment>
<comment type="catalytic activity">
    <reaction evidence="1">
        <text>a 1,2-diacyl-sn-glycero-3-phosphoethanolamine + S-adenosyl-L-methionine = a 1,2-diacyl-sn-glycero-3-phospho-N-methylethanolamine + S-adenosyl-L-homocysteine + H(+)</text>
        <dbReference type="Rhea" id="RHEA:11164"/>
        <dbReference type="ChEBI" id="CHEBI:15378"/>
        <dbReference type="ChEBI" id="CHEBI:57856"/>
        <dbReference type="ChEBI" id="CHEBI:59789"/>
        <dbReference type="ChEBI" id="CHEBI:64573"/>
        <dbReference type="ChEBI" id="CHEBI:64612"/>
        <dbReference type="EC" id="2.1.1.17"/>
    </reaction>
</comment>
<comment type="pathway">
    <text evidence="1">Phospholipid metabolism; phosphatidylcholine biosynthesis.</text>
</comment>
<comment type="subcellular location">
    <subcellularLocation>
        <location evidence="1 3">Endoplasmic reticulum membrane</location>
        <topology evidence="1">Multi-pass membrane protein</topology>
    </subcellularLocation>
</comment>
<comment type="similarity">
    <text evidence="1">Belongs to the class VI-like SAM-binding methyltransferase superfamily. CHO2 family.</text>
</comment>
<name>CHO2_SCHPO</name>
<sequence length="905" mass="102762">MTNQIPSASSAADFGSSKSTSVDAVPNMDKSSSVRRKNIDSNGLQQTNQIEQAESSLNAEADHSEPERYGCTPSGKVFLLPKEQENRRSILETVDPRFSKTPWDWIVISSILAQVLLFFMTTGAVRRYSMMLCFFFWRISYDAGIGFLLHMQSNHRKVVTWISDFGFFDKENHPKLYDLTKKQLISKMDSSYNYDTSPLEFNSWLVFRHFVDLILMCDFCSYILMGLAWTCWPKVNIILQFLRIFGGIALIVFNYWVKMDAHRVVRDYAWYWGDFFFLLRSSLVFNGVFELAPHPMYSVGYAGYYGMSLLTGSYAVLFASILAHAAQFGFLLFVENPHIERTYGTDINHARLSPRGEDNEFELPPEHDLVGFVNFDFTRISDVALLIIALYSIFIILLSSNSHYSQFWAIFQAFVWRFLHSIIHAFILFYQSKSKAWTKHFIRNGESAAYAWSQWKGLYNLTLNMSYISFVMAAWKLYHLPSNWTYGLVSLRHALGFGLIALHIYTSVSIYEDLGQYGWFYGDFFLPSRSPKLVYQGIYRYVNNPERFLGCSAYWGLALISSSAWIFLIAILAQLSNLAIIRLVEQPHMQKVYGNTLRKEAGISKLIKQATSEKGNILPKTVETHMKALTTSVDKVLDQTAEALEEFVNTAPPKVQELLKGTESNLRKNAQLAILKLFAPQLSSSTHFDYKLEIKGIDNNQVLLGHPITVCWTASPNHEINDWIGLYKLSDNASDLYTQTSSEGRWSAIDANGYTSHCSSIKSLSNDKNSGEVEFSGDLLFWETGTFEFRYHYGGKHLVMAKTEPFVITATSMNTTDVDEVSAYLLKSIKFCDPNITPHDGDASLCDISEGSARKLTSIIKYSFGIDLSYRVVQVDGSCSALSRRIVNSLKILQSFDGPSGAKDD</sequence>
<keyword id="KW-0256">Endoplasmic reticulum</keyword>
<keyword id="KW-0444">Lipid biosynthesis</keyword>
<keyword id="KW-0443">Lipid metabolism</keyword>
<keyword id="KW-0472">Membrane</keyword>
<keyword id="KW-0489">Methyltransferase</keyword>
<keyword id="KW-0594">Phospholipid biosynthesis</keyword>
<keyword id="KW-1208">Phospholipid metabolism</keyword>
<keyword id="KW-0597">Phosphoprotein</keyword>
<keyword id="KW-1185">Reference proteome</keyword>
<keyword id="KW-0949">S-adenosyl-L-methionine</keyword>
<keyword id="KW-0808">Transferase</keyword>
<keyword id="KW-0812">Transmembrane</keyword>
<keyword id="KW-1133">Transmembrane helix</keyword>
<organism>
    <name type="scientific">Schizosaccharomyces pombe (strain 972 / ATCC 24843)</name>
    <name type="common">Fission yeast</name>
    <dbReference type="NCBI Taxonomy" id="284812"/>
    <lineage>
        <taxon>Eukaryota</taxon>
        <taxon>Fungi</taxon>
        <taxon>Dikarya</taxon>
        <taxon>Ascomycota</taxon>
        <taxon>Taphrinomycotina</taxon>
        <taxon>Schizosaccharomycetes</taxon>
        <taxon>Schizosaccharomycetales</taxon>
        <taxon>Schizosaccharomycetaceae</taxon>
        <taxon>Schizosaccharomyces</taxon>
    </lineage>
</organism>
<evidence type="ECO:0000255" key="1">
    <source>
        <dbReference type="HAMAP-Rule" id="MF_03217"/>
    </source>
</evidence>
<evidence type="ECO:0000256" key="2">
    <source>
        <dbReference type="SAM" id="MobiDB-lite"/>
    </source>
</evidence>
<evidence type="ECO:0000269" key="3">
    <source>
    </source>
</evidence>
<evidence type="ECO:0000269" key="4">
    <source>
    </source>
</evidence>
<evidence type="ECO:0000303" key="5">
    <source ref="2"/>
</evidence>
<evidence type="ECO:0000305" key="6"/>
<evidence type="ECO:0000312" key="7">
    <source>
        <dbReference type="PomBase" id="SPBC26H8.03"/>
    </source>
</evidence>
<feature type="chain" id="PRO_0000089647" description="Phosphatidylethanolamine N-methyltransferase">
    <location>
        <begin position="1"/>
        <end position="905"/>
    </location>
</feature>
<feature type="topological domain" description="Lumenal" evidence="1">
    <location>
        <begin position="1"/>
        <end position="104"/>
    </location>
</feature>
<feature type="transmembrane region" description="Helical" evidence="1">
    <location>
        <begin position="105"/>
        <end position="125"/>
    </location>
</feature>
<feature type="topological domain" description="Cytoplasmic" evidence="1">
    <location>
        <begin position="126"/>
        <end position="128"/>
    </location>
</feature>
<feature type="transmembrane region" description="Helical" evidence="1">
    <location>
        <begin position="129"/>
        <end position="149"/>
    </location>
</feature>
<feature type="topological domain" description="Lumenal" evidence="1">
    <location>
        <begin position="150"/>
        <end position="209"/>
    </location>
</feature>
<feature type="transmembrane region" description="Helical" evidence="1">
    <location>
        <begin position="210"/>
        <end position="230"/>
    </location>
</feature>
<feature type="topological domain" description="Cytoplasmic" evidence="1">
    <location>
        <begin position="231"/>
        <end position="236"/>
    </location>
</feature>
<feature type="transmembrane region" description="Helical" evidence="1">
    <location>
        <begin position="237"/>
        <end position="257"/>
    </location>
</feature>
<feature type="topological domain" description="Lumenal" evidence="1">
    <location>
        <begin position="258"/>
        <end position="268"/>
    </location>
</feature>
<feature type="transmembrane region" description="Helical" evidence="1">
    <location>
        <begin position="269"/>
        <end position="289"/>
    </location>
</feature>
<feature type="topological domain" description="Cytoplasmic" evidence="1">
    <location>
        <begin position="290"/>
        <end position="313"/>
    </location>
</feature>
<feature type="transmembrane region" description="Helical" evidence="1">
    <location>
        <begin position="314"/>
        <end position="334"/>
    </location>
</feature>
<feature type="topological domain" description="Lumenal" evidence="1">
    <location>
        <begin position="335"/>
        <end position="379"/>
    </location>
</feature>
<feature type="transmembrane region" description="Helical" evidence="1">
    <location>
        <begin position="380"/>
        <end position="400"/>
    </location>
</feature>
<feature type="topological domain" description="Cytoplasmic" evidence="1">
    <location>
        <begin position="401"/>
        <end position="408"/>
    </location>
</feature>
<feature type="transmembrane region" description="Helical" evidence="1">
    <location>
        <begin position="409"/>
        <end position="429"/>
    </location>
</feature>
<feature type="topological domain" description="Lumenal" evidence="1">
    <location>
        <begin position="430"/>
        <end position="456"/>
    </location>
</feature>
<feature type="transmembrane region" description="Helical" evidence="1">
    <location>
        <begin position="457"/>
        <end position="479"/>
    </location>
</feature>
<feature type="topological domain" description="Cytoplasmic" evidence="1">
    <location>
        <begin position="480"/>
        <end position="493"/>
    </location>
</feature>
<feature type="transmembrane region" description="Helical" evidence="1">
    <location>
        <begin position="494"/>
        <end position="514"/>
    </location>
</feature>
<feature type="topological domain" description="Lumenal" evidence="1">
    <location>
        <begin position="515"/>
        <end position="552"/>
    </location>
</feature>
<feature type="transmembrane region" description="Helical" evidence="1">
    <location>
        <begin position="553"/>
        <end position="573"/>
    </location>
</feature>
<feature type="topological domain" description="Cytoplasmic" evidence="1">
    <location>
        <begin position="574"/>
        <end position="905"/>
    </location>
</feature>
<feature type="region of interest" description="Disordered" evidence="2">
    <location>
        <begin position="1"/>
        <end position="73"/>
    </location>
</feature>
<feature type="compositionally biased region" description="Polar residues" evidence="2">
    <location>
        <begin position="1"/>
        <end position="22"/>
    </location>
</feature>
<feature type="compositionally biased region" description="Polar residues" evidence="2">
    <location>
        <begin position="40"/>
        <end position="58"/>
    </location>
</feature>
<feature type="modified residue" description="Phosphoserine" evidence="4">
    <location>
        <position position="353"/>
    </location>
</feature>
<feature type="sequence conflict" description="In Ref. 2; AAB61410." evidence="6" ref="2">
    <original>C</original>
    <variation>G</variation>
    <location>
        <position position="133"/>
    </location>
</feature>
<feature type="sequence conflict" description="In Ref. 2; AAB61410." evidence="6" ref="2">
    <original>W</original>
    <variation>G</variation>
    <location>
        <position position="137"/>
    </location>
</feature>
<feature type="sequence conflict" description="In Ref. 2; AAB61410." evidence="6" ref="2">
    <original>L</original>
    <variation>Q</variation>
    <location>
        <position position="149"/>
    </location>
</feature>
<gene>
    <name evidence="5" type="primary">cho2</name>
    <name evidence="7" type="ORF">SPBC26H8.03</name>
</gene>
<dbReference type="EC" id="2.1.1.17" evidence="1"/>
<dbReference type="EMBL" id="CU329671">
    <property type="protein sequence ID" value="CAA21095.1"/>
    <property type="molecule type" value="Genomic_DNA"/>
</dbReference>
<dbReference type="EMBL" id="AF004113">
    <property type="protein sequence ID" value="AAB61410.1"/>
    <property type="molecule type" value="Genomic_DNA"/>
</dbReference>
<dbReference type="PIR" id="T40015">
    <property type="entry name" value="T40015"/>
</dbReference>
<dbReference type="RefSeq" id="NP_596644.1">
    <property type="nucleotide sequence ID" value="NM_001022566.2"/>
</dbReference>
<dbReference type="SMR" id="O74787"/>
<dbReference type="BioGRID" id="277065">
    <property type="interactions" value="20"/>
</dbReference>
<dbReference type="FunCoup" id="O74787">
    <property type="interactions" value="66"/>
</dbReference>
<dbReference type="STRING" id="284812.O74787"/>
<dbReference type="iPTMnet" id="O74787"/>
<dbReference type="PaxDb" id="4896-SPBC26H8.03.1"/>
<dbReference type="EnsemblFungi" id="SPBC26H8.03.1">
    <property type="protein sequence ID" value="SPBC26H8.03.1:pep"/>
    <property type="gene ID" value="SPBC26H8.03"/>
</dbReference>
<dbReference type="GeneID" id="2540538"/>
<dbReference type="KEGG" id="spo:2540538"/>
<dbReference type="PomBase" id="SPBC26H8.03">
    <property type="gene designation" value="cho2"/>
</dbReference>
<dbReference type="VEuPathDB" id="FungiDB:SPBC26H8.03"/>
<dbReference type="eggNOG" id="ENOG502QRGH">
    <property type="taxonomic scope" value="Eukaryota"/>
</dbReference>
<dbReference type="HOGENOM" id="CLU_005987_0_0_1"/>
<dbReference type="InParanoid" id="O74787"/>
<dbReference type="OMA" id="RIWYSVG"/>
<dbReference type="PhylomeDB" id="O74787"/>
<dbReference type="UniPathway" id="UPA00753"/>
<dbReference type="PRO" id="PR:O74787"/>
<dbReference type="Proteomes" id="UP000002485">
    <property type="component" value="Chromosome II"/>
</dbReference>
<dbReference type="GO" id="GO:0032541">
    <property type="term" value="C:cortical endoplasmic reticulum"/>
    <property type="evidence" value="ECO:0000314"/>
    <property type="project" value="PomBase"/>
</dbReference>
<dbReference type="GO" id="GO:0005789">
    <property type="term" value="C:endoplasmic reticulum membrane"/>
    <property type="evidence" value="ECO:0007005"/>
    <property type="project" value="PomBase"/>
</dbReference>
<dbReference type="GO" id="GO:0097038">
    <property type="term" value="C:perinuclear endoplasmic reticulum"/>
    <property type="evidence" value="ECO:0000314"/>
    <property type="project" value="PomBase"/>
</dbReference>
<dbReference type="GO" id="GO:0004608">
    <property type="term" value="F:phosphatidylethanolamine N-methyltransferase activity"/>
    <property type="evidence" value="ECO:0000316"/>
    <property type="project" value="PomBase"/>
</dbReference>
<dbReference type="GO" id="GO:0032259">
    <property type="term" value="P:methylation"/>
    <property type="evidence" value="ECO:0007669"/>
    <property type="project" value="UniProtKB-KW"/>
</dbReference>
<dbReference type="GO" id="GO:0006656">
    <property type="term" value="P:phosphatidylcholine biosynthetic process"/>
    <property type="evidence" value="ECO:0000318"/>
    <property type="project" value="GO_Central"/>
</dbReference>
<dbReference type="Gene3D" id="1.20.120.1630">
    <property type="match status" value="1"/>
</dbReference>
<dbReference type="HAMAP" id="MF_03217">
    <property type="entry name" value="PEMT"/>
    <property type="match status" value="1"/>
</dbReference>
<dbReference type="InterPro" id="IPR007318">
    <property type="entry name" value="Phopholipid_MeTrfase"/>
</dbReference>
<dbReference type="InterPro" id="IPR016219">
    <property type="entry name" value="Phosphatid-EA_MeTrfase_fun"/>
</dbReference>
<dbReference type="PANTHER" id="PTHR32138">
    <property type="entry name" value="PHOSPHATIDYLETHANOLAMINE N-METHYLTRANSFERASE"/>
    <property type="match status" value="1"/>
</dbReference>
<dbReference type="PANTHER" id="PTHR32138:SF0">
    <property type="entry name" value="PHOSPHATIDYLETHANOLAMINE N-METHYLTRANSFERASE"/>
    <property type="match status" value="1"/>
</dbReference>
<dbReference type="Pfam" id="PF04191">
    <property type="entry name" value="PEMT"/>
    <property type="match status" value="2"/>
</dbReference>
<dbReference type="PIRSF" id="PIRSF000383">
    <property type="entry name" value="PEAMT"/>
    <property type="match status" value="1"/>
</dbReference>
<dbReference type="PROSITE" id="PS51598">
    <property type="entry name" value="SAM_CHO2"/>
    <property type="match status" value="1"/>
</dbReference>
<accession>O74787</accession>
<accession>P87301</accession>
<proteinExistence type="evidence at protein level"/>
<protein>
    <recommendedName>
        <fullName evidence="1 5">Phosphatidylethanolamine N-methyltransferase</fullName>
        <shortName evidence="1">PE methyltransferase</shortName>
        <shortName evidence="1">PEAMT</shortName>
        <shortName evidence="1">PEMT</shortName>
        <ecNumber evidence="1">2.1.1.17</ecNumber>
    </recommendedName>
</protein>